<comment type="function">
    <text evidence="1 4 5">Member of the two-component regulatory system DctS/DctR. Probably activates DctR by phosphorylation (By similarity). Essential for expression of dctP.</text>
</comment>
<comment type="catalytic activity">
    <reaction>
        <text>ATP + protein L-histidine = ADP + protein N-phospho-L-histidine.</text>
        <dbReference type="EC" id="2.7.13.3"/>
    </reaction>
</comment>
<comment type="subcellular location">
    <subcellularLocation>
        <location evidence="6">Cell membrane</location>
        <topology evidence="6">Multi-pass membrane protein</topology>
    </subcellularLocation>
</comment>
<evidence type="ECO:0000250" key="1"/>
<evidence type="ECO:0000255" key="2"/>
<evidence type="ECO:0000255" key="3">
    <source>
        <dbReference type="PROSITE-ProRule" id="PRU00107"/>
    </source>
</evidence>
<evidence type="ECO:0000269" key="4">
    <source>
    </source>
</evidence>
<evidence type="ECO:0000269" key="5">
    <source>
    </source>
</evidence>
<evidence type="ECO:0000305" key="6"/>
<keyword id="KW-0067">ATP-binding</keyword>
<keyword id="KW-1003">Cell membrane</keyword>
<keyword id="KW-0418">Kinase</keyword>
<keyword id="KW-0472">Membrane</keyword>
<keyword id="KW-0547">Nucleotide-binding</keyword>
<keyword id="KW-0597">Phosphoprotein</keyword>
<keyword id="KW-1185">Reference proteome</keyword>
<keyword id="KW-0808">Transferase</keyword>
<keyword id="KW-0812">Transmembrane</keyword>
<keyword id="KW-1133">Transmembrane helix</keyword>
<keyword id="KW-0902">Two-component regulatory system</keyword>
<organism>
    <name type="scientific">Bacillus subtilis (strain 168)</name>
    <dbReference type="NCBI Taxonomy" id="224308"/>
    <lineage>
        <taxon>Bacteria</taxon>
        <taxon>Bacillati</taxon>
        <taxon>Bacillota</taxon>
        <taxon>Bacilli</taxon>
        <taxon>Bacillales</taxon>
        <taxon>Bacillaceae</taxon>
        <taxon>Bacillus</taxon>
    </lineage>
</organism>
<protein>
    <recommendedName>
        <fullName>Probable C4-dicarboxylate sensor kinase</fullName>
        <ecNumber>2.7.13.3</ecNumber>
    </recommendedName>
</protein>
<gene>
    <name type="primary">dctS</name>
    <name type="synonym">ydbF</name>
    <name type="ordered locus">BSU04450</name>
</gene>
<accession>P96601</accession>
<name>DCTS_BACSU</name>
<feature type="chain" id="PRO_0000074728" description="Probable C4-dicarboxylate sensor kinase">
    <location>
        <begin position="1"/>
        <end position="535"/>
    </location>
</feature>
<feature type="topological domain" description="Cytoplasmic" evidence="2">
    <location>
        <begin position="1"/>
        <end position="11"/>
    </location>
</feature>
<feature type="transmembrane region" description="Helical" evidence="2">
    <location>
        <begin position="12"/>
        <end position="32"/>
    </location>
</feature>
<feature type="topological domain" description="Extracellular" evidence="2">
    <location>
        <begin position="33"/>
        <end position="172"/>
    </location>
</feature>
<feature type="transmembrane region" description="Helical" evidence="2">
    <location>
        <begin position="173"/>
        <end position="193"/>
    </location>
</feature>
<feature type="topological domain" description="Cytoplasmic" evidence="2">
    <location>
        <begin position="194"/>
        <end position="535"/>
    </location>
</feature>
<feature type="domain" description="PAS">
    <location>
        <begin position="213"/>
        <end position="276"/>
    </location>
</feature>
<feature type="domain" description="Histidine kinase" evidence="3">
    <location>
        <begin position="333"/>
        <end position="528"/>
    </location>
</feature>
<feature type="modified residue" description="Phosphohistidine; by autocatalysis" evidence="3">
    <location>
        <position position="336"/>
    </location>
</feature>
<proteinExistence type="inferred from homology"/>
<dbReference type="EC" id="2.7.13.3"/>
<dbReference type="EMBL" id="AB001488">
    <property type="protein sequence ID" value="BAA19282.1"/>
    <property type="molecule type" value="Genomic_DNA"/>
</dbReference>
<dbReference type="EMBL" id="AL009126">
    <property type="protein sequence ID" value="CAB12252.1"/>
    <property type="molecule type" value="Genomic_DNA"/>
</dbReference>
<dbReference type="PIR" id="A69771">
    <property type="entry name" value="A69771"/>
</dbReference>
<dbReference type="RefSeq" id="NP_388326.1">
    <property type="nucleotide sequence ID" value="NC_000964.3"/>
</dbReference>
<dbReference type="RefSeq" id="WP_003234348.1">
    <property type="nucleotide sequence ID" value="NZ_OZ025638.1"/>
</dbReference>
<dbReference type="SMR" id="P96601"/>
<dbReference type="FunCoup" id="P96601">
    <property type="interactions" value="191"/>
</dbReference>
<dbReference type="STRING" id="224308.BSU04450"/>
<dbReference type="PaxDb" id="224308-BSU04450"/>
<dbReference type="DNASU" id="938231"/>
<dbReference type="EnsemblBacteria" id="CAB12252">
    <property type="protein sequence ID" value="CAB12252"/>
    <property type="gene ID" value="BSU_04450"/>
</dbReference>
<dbReference type="GeneID" id="938231"/>
<dbReference type="KEGG" id="bsu:BSU04450"/>
<dbReference type="PATRIC" id="fig|224308.179.peg.471"/>
<dbReference type="eggNOG" id="COG3290">
    <property type="taxonomic scope" value="Bacteria"/>
</dbReference>
<dbReference type="InParanoid" id="P96601"/>
<dbReference type="OrthoDB" id="9792686at2"/>
<dbReference type="PhylomeDB" id="P96601"/>
<dbReference type="BioCyc" id="BSUB:BSU04450-MONOMER"/>
<dbReference type="Proteomes" id="UP000001570">
    <property type="component" value="Chromosome"/>
</dbReference>
<dbReference type="GO" id="GO:0005886">
    <property type="term" value="C:plasma membrane"/>
    <property type="evidence" value="ECO:0007669"/>
    <property type="project" value="UniProtKB-SubCell"/>
</dbReference>
<dbReference type="GO" id="GO:0005524">
    <property type="term" value="F:ATP binding"/>
    <property type="evidence" value="ECO:0007669"/>
    <property type="project" value="UniProtKB-KW"/>
</dbReference>
<dbReference type="GO" id="GO:0000155">
    <property type="term" value="F:phosphorelay sensor kinase activity"/>
    <property type="evidence" value="ECO:0000318"/>
    <property type="project" value="GO_Central"/>
</dbReference>
<dbReference type="CDD" id="cd00130">
    <property type="entry name" value="PAS"/>
    <property type="match status" value="1"/>
</dbReference>
<dbReference type="Gene3D" id="1.10.287.130">
    <property type="match status" value="1"/>
</dbReference>
<dbReference type="Gene3D" id="3.30.565.10">
    <property type="entry name" value="Histidine kinase-like ATPase, C-terminal domain"/>
    <property type="match status" value="1"/>
</dbReference>
<dbReference type="Gene3D" id="3.30.450.20">
    <property type="entry name" value="PAS domain"/>
    <property type="match status" value="2"/>
</dbReference>
<dbReference type="InterPro" id="IPR036890">
    <property type="entry name" value="HATPase_C_sf"/>
</dbReference>
<dbReference type="InterPro" id="IPR005467">
    <property type="entry name" value="His_kinase_dom"/>
</dbReference>
<dbReference type="InterPro" id="IPR000014">
    <property type="entry name" value="PAS"/>
</dbReference>
<dbReference type="InterPro" id="IPR035965">
    <property type="entry name" value="PAS-like_dom_sf"/>
</dbReference>
<dbReference type="InterPro" id="IPR033463">
    <property type="entry name" value="sCache_3"/>
</dbReference>
<dbReference type="InterPro" id="IPR029151">
    <property type="entry name" value="Sensor-like_sf"/>
</dbReference>
<dbReference type="InterPro" id="IPR004358">
    <property type="entry name" value="Sig_transdc_His_kin-like_C"/>
</dbReference>
<dbReference type="InterPro" id="IPR016120">
    <property type="entry name" value="Sig_transdc_His_kin_SpoOB"/>
</dbReference>
<dbReference type="InterPro" id="IPR039506">
    <property type="entry name" value="SPOB_a"/>
</dbReference>
<dbReference type="PANTHER" id="PTHR43547:SF10">
    <property type="entry name" value="SENSOR HISTIDINE KINASE DCUS"/>
    <property type="match status" value="1"/>
</dbReference>
<dbReference type="PANTHER" id="PTHR43547">
    <property type="entry name" value="TWO-COMPONENT HISTIDINE KINASE"/>
    <property type="match status" value="1"/>
</dbReference>
<dbReference type="Pfam" id="PF02518">
    <property type="entry name" value="HATPase_c"/>
    <property type="match status" value="1"/>
</dbReference>
<dbReference type="Pfam" id="PF17203">
    <property type="entry name" value="sCache_3_2"/>
    <property type="match status" value="1"/>
</dbReference>
<dbReference type="Pfam" id="PF14689">
    <property type="entry name" value="SPOB_a"/>
    <property type="match status" value="1"/>
</dbReference>
<dbReference type="PRINTS" id="PR00344">
    <property type="entry name" value="BCTRLSENSOR"/>
</dbReference>
<dbReference type="SMART" id="SM00387">
    <property type="entry name" value="HATPase_c"/>
    <property type="match status" value="1"/>
</dbReference>
<dbReference type="SMART" id="SM00091">
    <property type="entry name" value="PAS"/>
    <property type="match status" value="1"/>
</dbReference>
<dbReference type="SUPFAM" id="SSF55874">
    <property type="entry name" value="ATPase domain of HSP90 chaperone/DNA topoisomerase II/histidine kinase"/>
    <property type="match status" value="1"/>
</dbReference>
<dbReference type="SUPFAM" id="SSF55785">
    <property type="entry name" value="PYP-like sensor domain (PAS domain)"/>
    <property type="match status" value="1"/>
</dbReference>
<dbReference type="SUPFAM" id="SSF103190">
    <property type="entry name" value="Sensory domain-like"/>
    <property type="match status" value="1"/>
</dbReference>
<dbReference type="SUPFAM" id="SSF55890">
    <property type="entry name" value="Sporulation response regulatory protein Spo0B"/>
    <property type="match status" value="1"/>
</dbReference>
<dbReference type="PROSITE" id="PS50109">
    <property type="entry name" value="HIS_KIN"/>
    <property type="match status" value="1"/>
</dbReference>
<sequence length="535" mass="59942">MNKKKLSIRWKITILSYILVIFSFLIGGIVLIGNIQHTEERELKKRLMNTARTVSEMTEVKEALARKKQTEAVRHAVEEIRMINEADYIVVMDMNHIRYTHPVSTSIGKKSEGADEEAAFAEHIYFSEAKGEIGTAVRAFYPVKDQDLNQIGVVLVGKTLPGIADILLHLKRDIAFIVVLTLGFGLAGSFLLARHIKKQMFQLEPHEIVRMYEERTATFHSMNEGVIAIDNRLVITIFNEKAKQIFEVQGDLIGKVIWEVLKDSRLPEIVERNKAVYNEEIRVSGKVIMSSRIPIVMKKKVIGAVAIFQDRTEAAKMAEELTGVRNFVEALRVQNHEHMNKLHTIAGLIQLGKSEKALQLAFQASTEQENVTEFLHRSIQNDAAAGLLLSKIRRGRELGIAVHIDENSSLQQFPEHVDQHDIVVLLGNLIENAFGSFETVQSEDKRIDISIEQTDDILAILIEDNGCGIEPTHMPRLYDKGFTVNKTGGTGYGLYLVKQIIDKGSGTIEVDSHAGQGTSFSIVFPMKGEEAQHGS</sequence>
<reference key="1">
    <citation type="submission" date="1997-03" db="EMBL/GenBank/DDBJ databases">
        <title>A 148 kbp sequence of the region between 35 and 47 degree of the Bacillus subtilis genome.</title>
        <authorList>
            <person name="Kasahara Y."/>
            <person name="Nakai S."/>
            <person name="Lee S."/>
            <person name="Sadaie Y."/>
            <person name="Ogasawara N."/>
        </authorList>
    </citation>
    <scope>NUCLEOTIDE SEQUENCE [GENOMIC DNA]</scope>
    <source>
        <strain>168</strain>
    </source>
</reference>
<reference key="2">
    <citation type="journal article" date="1997" name="Nature">
        <title>The complete genome sequence of the Gram-positive bacterium Bacillus subtilis.</title>
        <authorList>
            <person name="Kunst F."/>
            <person name="Ogasawara N."/>
            <person name="Moszer I."/>
            <person name="Albertini A.M."/>
            <person name="Alloni G."/>
            <person name="Azevedo V."/>
            <person name="Bertero M.G."/>
            <person name="Bessieres P."/>
            <person name="Bolotin A."/>
            <person name="Borchert S."/>
            <person name="Borriss R."/>
            <person name="Boursier L."/>
            <person name="Brans A."/>
            <person name="Braun M."/>
            <person name="Brignell S.C."/>
            <person name="Bron S."/>
            <person name="Brouillet S."/>
            <person name="Bruschi C.V."/>
            <person name="Caldwell B."/>
            <person name="Capuano V."/>
            <person name="Carter N.M."/>
            <person name="Choi S.-K."/>
            <person name="Codani J.-J."/>
            <person name="Connerton I.F."/>
            <person name="Cummings N.J."/>
            <person name="Daniel R.A."/>
            <person name="Denizot F."/>
            <person name="Devine K.M."/>
            <person name="Duesterhoeft A."/>
            <person name="Ehrlich S.D."/>
            <person name="Emmerson P.T."/>
            <person name="Entian K.-D."/>
            <person name="Errington J."/>
            <person name="Fabret C."/>
            <person name="Ferrari E."/>
            <person name="Foulger D."/>
            <person name="Fritz C."/>
            <person name="Fujita M."/>
            <person name="Fujita Y."/>
            <person name="Fuma S."/>
            <person name="Galizzi A."/>
            <person name="Galleron N."/>
            <person name="Ghim S.-Y."/>
            <person name="Glaser P."/>
            <person name="Goffeau A."/>
            <person name="Golightly E.J."/>
            <person name="Grandi G."/>
            <person name="Guiseppi G."/>
            <person name="Guy B.J."/>
            <person name="Haga K."/>
            <person name="Haiech J."/>
            <person name="Harwood C.R."/>
            <person name="Henaut A."/>
            <person name="Hilbert H."/>
            <person name="Holsappel S."/>
            <person name="Hosono S."/>
            <person name="Hullo M.-F."/>
            <person name="Itaya M."/>
            <person name="Jones L.-M."/>
            <person name="Joris B."/>
            <person name="Karamata D."/>
            <person name="Kasahara Y."/>
            <person name="Klaerr-Blanchard M."/>
            <person name="Klein C."/>
            <person name="Kobayashi Y."/>
            <person name="Koetter P."/>
            <person name="Koningstein G."/>
            <person name="Krogh S."/>
            <person name="Kumano M."/>
            <person name="Kurita K."/>
            <person name="Lapidus A."/>
            <person name="Lardinois S."/>
            <person name="Lauber J."/>
            <person name="Lazarevic V."/>
            <person name="Lee S.-M."/>
            <person name="Levine A."/>
            <person name="Liu H."/>
            <person name="Masuda S."/>
            <person name="Mauel C."/>
            <person name="Medigue C."/>
            <person name="Medina N."/>
            <person name="Mellado R.P."/>
            <person name="Mizuno M."/>
            <person name="Moestl D."/>
            <person name="Nakai S."/>
            <person name="Noback M."/>
            <person name="Noone D."/>
            <person name="O'Reilly M."/>
            <person name="Ogawa K."/>
            <person name="Ogiwara A."/>
            <person name="Oudega B."/>
            <person name="Park S.-H."/>
            <person name="Parro V."/>
            <person name="Pohl T.M."/>
            <person name="Portetelle D."/>
            <person name="Porwollik S."/>
            <person name="Prescott A.M."/>
            <person name="Presecan E."/>
            <person name="Pujic P."/>
            <person name="Purnelle B."/>
            <person name="Rapoport G."/>
            <person name="Rey M."/>
            <person name="Reynolds S."/>
            <person name="Rieger M."/>
            <person name="Rivolta C."/>
            <person name="Rocha E."/>
            <person name="Roche B."/>
            <person name="Rose M."/>
            <person name="Sadaie Y."/>
            <person name="Sato T."/>
            <person name="Scanlan E."/>
            <person name="Schleich S."/>
            <person name="Schroeter R."/>
            <person name="Scoffone F."/>
            <person name="Sekiguchi J."/>
            <person name="Sekowska A."/>
            <person name="Seror S.J."/>
            <person name="Serror P."/>
            <person name="Shin B.-S."/>
            <person name="Soldo B."/>
            <person name="Sorokin A."/>
            <person name="Tacconi E."/>
            <person name="Takagi T."/>
            <person name="Takahashi H."/>
            <person name="Takemaru K."/>
            <person name="Takeuchi M."/>
            <person name="Tamakoshi A."/>
            <person name="Tanaka T."/>
            <person name="Terpstra P."/>
            <person name="Tognoni A."/>
            <person name="Tosato V."/>
            <person name="Uchiyama S."/>
            <person name="Vandenbol M."/>
            <person name="Vannier F."/>
            <person name="Vassarotti A."/>
            <person name="Viari A."/>
            <person name="Wambutt R."/>
            <person name="Wedler E."/>
            <person name="Wedler H."/>
            <person name="Weitzenegger T."/>
            <person name="Winters P."/>
            <person name="Wipat A."/>
            <person name="Yamamoto H."/>
            <person name="Yamane K."/>
            <person name="Yasumoto K."/>
            <person name="Yata K."/>
            <person name="Yoshida K."/>
            <person name="Yoshikawa H.-F."/>
            <person name="Zumstein E."/>
            <person name="Yoshikawa H."/>
            <person name="Danchin A."/>
        </authorList>
    </citation>
    <scope>NUCLEOTIDE SEQUENCE [LARGE SCALE GENOMIC DNA]</scope>
    <source>
        <strain>168</strain>
    </source>
</reference>
<reference key="3">
    <citation type="journal article" date="2000" name="Microbiology">
        <title>Regulation of the transport system for C4-dicarboxylic acids in Bacillus subtilis.</title>
        <authorList>
            <person name="Asai K."/>
            <person name="Baik S.-H."/>
            <person name="Kasahara Y."/>
            <person name="Moriya S."/>
            <person name="Ogasawara N."/>
        </authorList>
    </citation>
    <scope>FUNCTION</scope>
    <scope>GENE NAME</scope>
    <source>
        <strain>168</strain>
    </source>
</reference>
<reference key="4">
    <citation type="journal article" date="2001" name="J. Bacteriol.">
        <title>Comprehensive DNA microarray analysis of Bacillus subtilis two-component regulatory systems.</title>
        <authorList>
            <person name="Kobayashi K."/>
            <person name="Ogura M."/>
            <person name="Yamaguchi H."/>
            <person name="Yoshida K."/>
            <person name="Ogasawara N."/>
            <person name="Tanaka T."/>
            <person name="Fujita Y."/>
        </authorList>
    </citation>
    <scope>FUNCTION</scope>
</reference>